<name>PGSA_STAAW</name>
<gene>
    <name type="primary">pgsA</name>
    <name type="ordered locus">MW1166</name>
</gene>
<feature type="chain" id="PRO_0000056789" description="CDP-diacylglycerol--glycerol-3-phosphate 3-phosphatidyltransferase">
    <location>
        <begin position="1"/>
        <end position="192"/>
    </location>
</feature>
<feature type="transmembrane region" description="Helical" evidence="2">
    <location>
        <begin position="7"/>
        <end position="29"/>
    </location>
</feature>
<feature type="transmembrane region" description="Helical" evidence="2">
    <location>
        <begin position="44"/>
        <end position="63"/>
    </location>
</feature>
<feature type="transmembrane region" description="Helical" evidence="2">
    <location>
        <begin position="84"/>
        <end position="106"/>
    </location>
</feature>
<feature type="transmembrane region" description="Helical" evidence="2">
    <location>
        <begin position="129"/>
        <end position="151"/>
    </location>
</feature>
<feature type="transmembrane region" description="Helical" evidence="2">
    <location>
        <begin position="157"/>
        <end position="179"/>
    </location>
</feature>
<accession>P63757</accession>
<accession>Q99UI9</accession>
<proteinExistence type="inferred from homology"/>
<evidence type="ECO:0000250" key="1"/>
<evidence type="ECO:0000255" key="2"/>
<evidence type="ECO:0000305" key="3"/>
<protein>
    <recommendedName>
        <fullName>CDP-diacylglycerol--glycerol-3-phosphate 3-phosphatidyltransferase</fullName>
        <ecNumber>2.7.8.5</ecNumber>
    </recommendedName>
    <alternativeName>
        <fullName>Phosphatidylglycerophosphate synthase</fullName>
        <shortName>PGP synthase</shortName>
    </alternativeName>
</protein>
<sequence length="192" mass="21014">MNIPNQITVFRVVLIPVFILFALVDFGFGNVSFLGGYEIRIELLISGFIFILASLSDFVDGYLARKWNLVTNMGKFLDPLADKLLVASALIVLVQLGLTNSVVAIIIIAREFAVTGLRLLQIEQGFVSAAGQLGKIKTAVTMVAITWLLLGDPLATLIGLSLGQILLYIGVIFTILSGIEYFYKGRDVFKQK</sequence>
<comment type="function">
    <text evidence="1">This protein catalyzes the committed step to the synthesis of the acidic phospholipids.</text>
</comment>
<comment type="catalytic activity">
    <reaction>
        <text>a CDP-1,2-diacyl-sn-glycerol + sn-glycerol 3-phosphate = a 1,2-diacyl-sn-glycero-3-phospho-(1'-sn-glycero-3'-phosphate) + CMP + H(+)</text>
        <dbReference type="Rhea" id="RHEA:12593"/>
        <dbReference type="ChEBI" id="CHEBI:15378"/>
        <dbReference type="ChEBI" id="CHEBI:57597"/>
        <dbReference type="ChEBI" id="CHEBI:58332"/>
        <dbReference type="ChEBI" id="CHEBI:60110"/>
        <dbReference type="ChEBI" id="CHEBI:60377"/>
        <dbReference type="EC" id="2.7.8.5"/>
    </reaction>
</comment>
<comment type="pathway">
    <text>Phospholipid metabolism; phosphatidylglycerol biosynthesis; phosphatidylglycerol from CDP-diacylglycerol: step 1/2.</text>
</comment>
<comment type="subcellular location">
    <subcellularLocation>
        <location evidence="1">Cell membrane</location>
        <topology evidence="1">Multi-pass membrane protein</topology>
    </subcellularLocation>
</comment>
<comment type="similarity">
    <text evidence="3">Belongs to the CDP-alcohol phosphatidyltransferase class-I family.</text>
</comment>
<reference key="1">
    <citation type="journal article" date="2002" name="Lancet">
        <title>Genome and virulence determinants of high virulence community-acquired MRSA.</title>
        <authorList>
            <person name="Baba T."/>
            <person name="Takeuchi F."/>
            <person name="Kuroda M."/>
            <person name="Yuzawa H."/>
            <person name="Aoki K."/>
            <person name="Oguchi A."/>
            <person name="Nagai Y."/>
            <person name="Iwama N."/>
            <person name="Asano K."/>
            <person name="Naimi T."/>
            <person name="Kuroda H."/>
            <person name="Cui L."/>
            <person name="Yamamoto K."/>
            <person name="Hiramatsu K."/>
        </authorList>
    </citation>
    <scope>NUCLEOTIDE SEQUENCE [LARGE SCALE GENOMIC DNA]</scope>
    <source>
        <strain>MW2</strain>
    </source>
</reference>
<dbReference type="EC" id="2.7.8.5"/>
<dbReference type="EMBL" id="BA000033">
    <property type="protein sequence ID" value="BAB95031.1"/>
    <property type="molecule type" value="Genomic_DNA"/>
</dbReference>
<dbReference type="RefSeq" id="WP_001025093.1">
    <property type="nucleotide sequence ID" value="NC_003923.1"/>
</dbReference>
<dbReference type="SMR" id="P63757"/>
<dbReference type="KEGG" id="sam:MW1166"/>
<dbReference type="HOGENOM" id="CLU_051314_2_3_9"/>
<dbReference type="UniPathway" id="UPA00084">
    <property type="reaction ID" value="UER00503"/>
</dbReference>
<dbReference type="GO" id="GO:0005886">
    <property type="term" value="C:plasma membrane"/>
    <property type="evidence" value="ECO:0007669"/>
    <property type="project" value="UniProtKB-SubCell"/>
</dbReference>
<dbReference type="GO" id="GO:0008444">
    <property type="term" value="F:CDP-diacylglycerol-glycerol-3-phosphate 3-phosphatidyltransferase activity"/>
    <property type="evidence" value="ECO:0007669"/>
    <property type="project" value="UniProtKB-EC"/>
</dbReference>
<dbReference type="GO" id="GO:0006655">
    <property type="term" value="P:phosphatidylglycerol biosynthetic process"/>
    <property type="evidence" value="ECO:0007669"/>
    <property type="project" value="UniProtKB-UniPathway"/>
</dbReference>
<dbReference type="FunFam" id="1.20.120.1760:FF:000004">
    <property type="entry name" value="CDP-diacylglycerol--glycerol-3-phosphate 3-phosphatidyltransferase"/>
    <property type="match status" value="1"/>
</dbReference>
<dbReference type="Gene3D" id="1.20.120.1760">
    <property type="match status" value="1"/>
</dbReference>
<dbReference type="InterPro" id="IPR050324">
    <property type="entry name" value="CDP-alcohol_PTase-I"/>
</dbReference>
<dbReference type="InterPro" id="IPR000462">
    <property type="entry name" value="CDP-OH_P_trans"/>
</dbReference>
<dbReference type="InterPro" id="IPR043130">
    <property type="entry name" value="CDP-OH_PTrfase_TM_dom"/>
</dbReference>
<dbReference type="InterPro" id="IPR048254">
    <property type="entry name" value="CDP_ALCOHOL_P_TRANSF_CS"/>
</dbReference>
<dbReference type="InterPro" id="IPR004570">
    <property type="entry name" value="Phosphatidylglycerol_P_synth"/>
</dbReference>
<dbReference type="NCBIfam" id="TIGR00560">
    <property type="entry name" value="pgsA"/>
    <property type="match status" value="1"/>
</dbReference>
<dbReference type="PANTHER" id="PTHR14269:SF62">
    <property type="entry name" value="CDP-DIACYLGLYCEROL--GLYCEROL-3-PHOSPHATE 3-PHOSPHATIDYLTRANSFERASE 1, CHLOROPLASTIC"/>
    <property type="match status" value="1"/>
</dbReference>
<dbReference type="PANTHER" id="PTHR14269">
    <property type="entry name" value="CDP-DIACYLGLYCEROL--GLYCEROL-3-PHOSPHATE 3-PHOSPHATIDYLTRANSFERASE-RELATED"/>
    <property type="match status" value="1"/>
</dbReference>
<dbReference type="Pfam" id="PF01066">
    <property type="entry name" value="CDP-OH_P_transf"/>
    <property type="match status" value="1"/>
</dbReference>
<dbReference type="PIRSF" id="PIRSF000847">
    <property type="entry name" value="Phos_ph_gly_syn"/>
    <property type="match status" value="1"/>
</dbReference>
<dbReference type="PROSITE" id="PS00379">
    <property type="entry name" value="CDP_ALCOHOL_P_TRANSF"/>
    <property type="match status" value="1"/>
</dbReference>
<organism>
    <name type="scientific">Staphylococcus aureus (strain MW2)</name>
    <dbReference type="NCBI Taxonomy" id="196620"/>
    <lineage>
        <taxon>Bacteria</taxon>
        <taxon>Bacillati</taxon>
        <taxon>Bacillota</taxon>
        <taxon>Bacilli</taxon>
        <taxon>Bacillales</taxon>
        <taxon>Staphylococcaceae</taxon>
        <taxon>Staphylococcus</taxon>
    </lineage>
</organism>
<keyword id="KW-1003">Cell membrane</keyword>
<keyword id="KW-0444">Lipid biosynthesis</keyword>
<keyword id="KW-0443">Lipid metabolism</keyword>
<keyword id="KW-0472">Membrane</keyword>
<keyword id="KW-0594">Phospholipid biosynthesis</keyword>
<keyword id="KW-1208">Phospholipid metabolism</keyword>
<keyword id="KW-0808">Transferase</keyword>
<keyword id="KW-0812">Transmembrane</keyword>
<keyword id="KW-1133">Transmembrane helix</keyword>